<dbReference type="EC" id="3.1.-.-" evidence="1"/>
<dbReference type="EC" id="5.6.2.4" evidence="1"/>
<dbReference type="EMBL" id="AE014133">
    <property type="protein sequence ID" value="AAN59152.1"/>
    <property type="molecule type" value="Genomic_DNA"/>
</dbReference>
<dbReference type="PIR" id="A43258">
    <property type="entry name" value="A43258"/>
</dbReference>
<dbReference type="RefSeq" id="NP_721846.1">
    <property type="nucleotide sequence ID" value="NC_004350.2"/>
</dbReference>
<dbReference type="RefSeq" id="WP_002262919.1">
    <property type="nucleotide sequence ID" value="NC_004350.2"/>
</dbReference>
<dbReference type="SMR" id="Q8DT76"/>
<dbReference type="STRING" id="210007.SMU_1499"/>
<dbReference type="DNASU" id="1028745"/>
<dbReference type="KEGG" id="smu:SMU_1499"/>
<dbReference type="PATRIC" id="fig|210007.7.peg.1334"/>
<dbReference type="eggNOG" id="COG1074">
    <property type="taxonomic scope" value="Bacteria"/>
</dbReference>
<dbReference type="HOGENOM" id="CLU_001114_3_1_9"/>
<dbReference type="OrthoDB" id="9810135at2"/>
<dbReference type="PhylomeDB" id="Q8DT76"/>
<dbReference type="Proteomes" id="UP000002512">
    <property type="component" value="Chromosome"/>
</dbReference>
<dbReference type="GO" id="GO:0005829">
    <property type="term" value="C:cytosol"/>
    <property type="evidence" value="ECO:0007669"/>
    <property type="project" value="TreeGrafter"/>
</dbReference>
<dbReference type="GO" id="GO:0033202">
    <property type="term" value="C:DNA helicase complex"/>
    <property type="evidence" value="ECO:0007669"/>
    <property type="project" value="TreeGrafter"/>
</dbReference>
<dbReference type="GO" id="GO:0043138">
    <property type="term" value="F:3'-5' DNA helicase activity"/>
    <property type="evidence" value="ECO:0007669"/>
    <property type="project" value="UniProtKB-UniRule"/>
</dbReference>
<dbReference type="GO" id="GO:0008408">
    <property type="term" value="F:3'-5' exonuclease activity"/>
    <property type="evidence" value="ECO:0007669"/>
    <property type="project" value="UniProtKB-UniRule"/>
</dbReference>
<dbReference type="GO" id="GO:0005524">
    <property type="term" value="F:ATP binding"/>
    <property type="evidence" value="ECO:0007669"/>
    <property type="project" value="UniProtKB-UniRule"/>
</dbReference>
<dbReference type="GO" id="GO:0016887">
    <property type="term" value="F:ATP hydrolysis activity"/>
    <property type="evidence" value="ECO:0007669"/>
    <property type="project" value="RHEA"/>
</dbReference>
<dbReference type="GO" id="GO:0003690">
    <property type="term" value="F:double-stranded DNA binding"/>
    <property type="evidence" value="ECO:0007669"/>
    <property type="project" value="UniProtKB-UniRule"/>
</dbReference>
<dbReference type="GO" id="GO:0000724">
    <property type="term" value="P:double-strand break repair via homologous recombination"/>
    <property type="evidence" value="ECO:0007669"/>
    <property type="project" value="UniProtKB-UniRule"/>
</dbReference>
<dbReference type="CDD" id="cd17932">
    <property type="entry name" value="DEXQc_UvrD"/>
    <property type="match status" value="1"/>
</dbReference>
<dbReference type="Gene3D" id="3.90.320.10">
    <property type="match status" value="1"/>
</dbReference>
<dbReference type="Gene3D" id="3.40.50.300">
    <property type="entry name" value="P-loop containing nucleotide triphosphate hydrolases"/>
    <property type="match status" value="4"/>
</dbReference>
<dbReference type="Gene3D" id="1.10.486.10">
    <property type="entry name" value="PCRA, domain 4"/>
    <property type="match status" value="1"/>
</dbReference>
<dbReference type="HAMAP" id="MF_01451">
    <property type="entry name" value="AddA"/>
    <property type="match status" value="1"/>
</dbReference>
<dbReference type="InterPro" id="IPR014152">
    <property type="entry name" value="AddA"/>
</dbReference>
<dbReference type="InterPro" id="IPR014017">
    <property type="entry name" value="DNA_helicase_UvrD-like_C"/>
</dbReference>
<dbReference type="InterPro" id="IPR000212">
    <property type="entry name" value="DNA_helicase_UvrD/REP"/>
</dbReference>
<dbReference type="InterPro" id="IPR027417">
    <property type="entry name" value="P-loop_NTPase"/>
</dbReference>
<dbReference type="InterPro" id="IPR011604">
    <property type="entry name" value="PDDEXK-like_dom_sf"/>
</dbReference>
<dbReference type="InterPro" id="IPR038726">
    <property type="entry name" value="PDDEXK_AddAB-type"/>
</dbReference>
<dbReference type="InterPro" id="IPR011335">
    <property type="entry name" value="Restrct_endonuc-II-like"/>
</dbReference>
<dbReference type="InterPro" id="IPR014016">
    <property type="entry name" value="UvrD-like_ATP-bd"/>
</dbReference>
<dbReference type="NCBIfam" id="TIGR02785">
    <property type="entry name" value="addA_Gpos"/>
    <property type="match status" value="1"/>
</dbReference>
<dbReference type="PANTHER" id="PTHR11070:SF48">
    <property type="entry name" value="ATP-DEPENDENT HELICASE_NUCLEASE SUBUNIT A"/>
    <property type="match status" value="1"/>
</dbReference>
<dbReference type="PANTHER" id="PTHR11070">
    <property type="entry name" value="UVRD / RECB / PCRA DNA HELICASE FAMILY MEMBER"/>
    <property type="match status" value="1"/>
</dbReference>
<dbReference type="Pfam" id="PF12705">
    <property type="entry name" value="PDDEXK_1"/>
    <property type="match status" value="1"/>
</dbReference>
<dbReference type="Pfam" id="PF00580">
    <property type="entry name" value="UvrD-helicase"/>
    <property type="match status" value="1"/>
</dbReference>
<dbReference type="Pfam" id="PF13361">
    <property type="entry name" value="UvrD_C"/>
    <property type="match status" value="1"/>
</dbReference>
<dbReference type="SUPFAM" id="SSF52540">
    <property type="entry name" value="P-loop containing nucleoside triphosphate hydrolases"/>
    <property type="match status" value="1"/>
</dbReference>
<dbReference type="SUPFAM" id="SSF52980">
    <property type="entry name" value="Restriction endonuclease-like"/>
    <property type="match status" value="1"/>
</dbReference>
<dbReference type="PROSITE" id="PS51198">
    <property type="entry name" value="UVRD_HELICASE_ATP_BIND"/>
    <property type="match status" value="1"/>
</dbReference>
<dbReference type="PROSITE" id="PS51217">
    <property type="entry name" value="UVRD_HELICASE_CTER"/>
    <property type="match status" value="1"/>
</dbReference>
<gene>
    <name evidence="1" type="primary">addA</name>
    <name type="synonym">rexA</name>
    <name type="ordered locus">SMU_1499</name>
</gene>
<comment type="function">
    <text evidence="1">The heterodimer acts as both an ATP-dependent DNA helicase and an ATP-dependent, dual-direction single-stranded exonuclease. Recognizes the chi site generating a DNA molecule suitable for the initiation of homologous recombination. The AddA nuclease domain is required for chi fragment generation; this subunit has the helicase and 3' -&gt; 5' nuclease activities.</text>
</comment>
<comment type="catalytic activity">
    <reaction evidence="1">
        <text>Couples ATP hydrolysis with the unwinding of duplex DNA by translocating in the 3'-5' direction.</text>
        <dbReference type="EC" id="5.6.2.4"/>
    </reaction>
</comment>
<comment type="catalytic activity">
    <reaction evidence="1">
        <text>ATP + H2O = ADP + phosphate + H(+)</text>
        <dbReference type="Rhea" id="RHEA:13065"/>
        <dbReference type="ChEBI" id="CHEBI:15377"/>
        <dbReference type="ChEBI" id="CHEBI:15378"/>
        <dbReference type="ChEBI" id="CHEBI:30616"/>
        <dbReference type="ChEBI" id="CHEBI:43474"/>
        <dbReference type="ChEBI" id="CHEBI:456216"/>
        <dbReference type="EC" id="5.6.2.4"/>
    </reaction>
</comment>
<comment type="cofactor">
    <cofactor evidence="1">
        <name>Mg(2+)</name>
        <dbReference type="ChEBI" id="CHEBI:18420"/>
    </cofactor>
</comment>
<comment type="subunit">
    <text evidence="1">Heterodimer of AddA and AddB/RexB.</text>
</comment>
<comment type="similarity">
    <text evidence="1">Belongs to the helicase family. AddA subfamily.</text>
</comment>
<organism>
    <name type="scientific">Streptococcus mutans serotype c (strain ATCC 700610 / UA159)</name>
    <dbReference type="NCBI Taxonomy" id="210007"/>
    <lineage>
        <taxon>Bacteria</taxon>
        <taxon>Bacillati</taxon>
        <taxon>Bacillota</taxon>
        <taxon>Bacilli</taxon>
        <taxon>Lactobacillales</taxon>
        <taxon>Streptococcaceae</taxon>
        <taxon>Streptococcus</taxon>
    </lineage>
</organism>
<name>ADDA_STRMU</name>
<evidence type="ECO:0000255" key="1">
    <source>
        <dbReference type="HAMAP-Rule" id="MF_01451"/>
    </source>
</evidence>
<protein>
    <recommendedName>
        <fullName evidence="1">ATP-dependent helicase/nuclease subunit A</fullName>
        <ecNumber evidence="1">3.1.-.-</ecNumber>
        <ecNumber evidence="1">5.6.2.4</ecNumber>
    </recommendedName>
    <alternativeName>
        <fullName evidence="1">ATP-dependent helicase/nuclease AddA</fullName>
    </alternativeName>
    <alternativeName>
        <fullName evidence="1">DNA 3'-5' helicase AddA</fullName>
    </alternativeName>
</protein>
<proteinExistence type="inferred from homology"/>
<reference key="1">
    <citation type="journal article" date="2002" name="Proc. Natl. Acad. Sci. U.S.A.">
        <title>Genome sequence of Streptococcus mutans UA159, a cariogenic dental pathogen.</title>
        <authorList>
            <person name="Ajdic D.J."/>
            <person name="McShan W.M."/>
            <person name="McLaughlin R.E."/>
            <person name="Savic G."/>
            <person name="Chang J."/>
            <person name="Carson M.B."/>
            <person name="Primeaux C."/>
            <person name="Tian R."/>
            <person name="Kenton S."/>
            <person name="Jia H.G."/>
            <person name="Lin S.P."/>
            <person name="Qian Y."/>
            <person name="Li S."/>
            <person name="Zhu H."/>
            <person name="Najar F.Z."/>
            <person name="Lai H."/>
            <person name="White J."/>
            <person name="Roe B.A."/>
            <person name="Ferretti J.J."/>
        </authorList>
    </citation>
    <scope>NUCLEOTIDE SEQUENCE [LARGE SCALE GENOMIC DNA]</scope>
    <source>
        <strain>ATCC 700610 / UA159</strain>
    </source>
</reference>
<keyword id="KW-0067">ATP-binding</keyword>
<keyword id="KW-0227">DNA damage</keyword>
<keyword id="KW-0234">DNA repair</keyword>
<keyword id="KW-0238">DNA-binding</keyword>
<keyword id="KW-0269">Exonuclease</keyword>
<keyword id="KW-0347">Helicase</keyword>
<keyword id="KW-0378">Hydrolase</keyword>
<keyword id="KW-0413">Isomerase</keyword>
<keyword id="KW-0540">Nuclease</keyword>
<keyword id="KW-0547">Nucleotide-binding</keyword>
<keyword id="KW-1185">Reference proteome</keyword>
<feature type="chain" id="PRO_0000379332" description="ATP-dependent helicase/nuclease subunit A">
    <location>
        <begin position="1"/>
        <end position="1212"/>
    </location>
</feature>
<feature type="domain" description="UvrD-like helicase ATP-binding" evidence="1">
    <location>
        <begin position="26"/>
        <end position="482"/>
    </location>
</feature>
<feature type="domain" description="UvrD-like helicase C-terminal" evidence="1">
    <location>
        <begin position="510"/>
        <end position="800"/>
    </location>
</feature>
<feature type="binding site" evidence="1">
    <location>
        <begin position="47"/>
        <end position="54"/>
    </location>
    <ligand>
        <name>ATP</name>
        <dbReference type="ChEBI" id="CHEBI:30616"/>
    </ligand>
</feature>
<sequence length="1212" mass="139292">MTFKPFLTDQEIASLQIQEAQSDKKQKRTPEQIEAIYTSGTNILVSASAGSGKTFVMIERIMDKILRGVTIDQLFISTFTVKAAGELKERLEKKITEQLRLTNDTALKQFLSEQLLGLQTADIGTMDAFTQKLVTQYGYTLGISPNFRILQDKSEQDLLKNDVFDDLFTDYRTGDQAELFTKLVRNFAGNRKDSSNFRQIIYKIYDFSQATDNPQRWLLENFLKGANTYKDFSAIPEQEVKDFLNTLQETALALRDVTDLEDYKQVTAKGTPTAAYQRHLKMIEQLQDWVLHFDSLYGRDGLGKLANDIATLIPSGNDVTVAGVKYPVFRSLHSRLRGLKHLETIFKYQDQSLPLLQVLQSFTLDFSKQYLQAKMQENAFEFSDIAHFAIQILEENDAIRQLYIDKYHEVMVDEYQDNNHTQERMLELLSNGRNRFMVGDIKQSIYRFRQADPQIFNQKFKDFQEHPEHGKLILLKENFRSQSEVLDATNSVFTHLMDEAVGEILYDDTHQLVAGSSAQKIPYPQNETQVLIYDTKDQQNQDLAVEDDSNQISLGEVKLVAKEIIRLHNEEKVQFEDITLLVSSRTRNDGILQTFDDYGIPLVTDGGEQNYLKSVEVMVMLDTLRSIDNPLNDYALVALLRSPMFAFDEDDLARLALQNLPDQHKQNLYEKMENARNGQGQQVQLITEALSAKLDAFFETFLSWREFSLLNSLYDLIWKIYNDKFYYDYVGSLPKSEQRQANLYALALRADNFEKTGFKGLSRFIRMIDKILENQNDLADVEVALPKNAVTLMTIHKSKGLEFKYVFILNIDKKFSIQDMTSPLILSRQNGVGIKYIADMKEELEEKLLPTVKVSMDTLPYQLNKRELRLATLSEQMRLLYVAMTRSEKKLYLVGKGSQEKLGDQYDGKSENNHLPVADREHYLTFQDWLLAIEAAYAADELHFKTSFITDEDLTEDKMGSLEAEQAYDADNLKDNRQSDDITRALDMLEAVEKLNQHYKAAIHLPTVRTPSQIKKFYEPVMETEGVEVMQTSYQTKPKFELPQFSKKAKQDPTALGSSVHELMQRLHLSEQVSLEDILTALAELSVEENVKKAIQVDKILHFFQTSQLGKLIQANADKVYREAPFAMLQADPASGEDYVVRGIIDGYILFDNRIVLFDYKTDKFTNSQAIKERYRGQMTLYAQALSQSYNIQQVDSYLILLGGEKLEVVEI</sequence>
<accession>Q8DT76</accession>